<name>AFP_PENRW</name>
<keyword id="KW-0002">3D-structure</keyword>
<keyword id="KW-0929">Antimicrobial</keyword>
<keyword id="KW-1015">Disulfide bond</keyword>
<keyword id="KW-0295">Fungicide</keyword>
<keyword id="KW-1035">Host cytoplasm</keyword>
<keyword id="KW-1185">Reference proteome</keyword>
<keyword id="KW-0964">Secreted</keyword>
<keyword id="KW-0732">Signal</keyword>
<proteinExistence type="evidence at protein level"/>
<gene>
    <name evidence="4" type="primary">pafB</name>
    <name type="ORF">Pc12g08290</name>
</gene>
<organism>
    <name type="scientific">Penicillium rubens (strain ATCC 28089 / DSM 1075 / NRRL 1951 / Wisconsin 54-1255)</name>
    <name type="common">Penicillium chrysogenum</name>
    <dbReference type="NCBI Taxonomy" id="500485"/>
    <lineage>
        <taxon>Eukaryota</taxon>
        <taxon>Fungi</taxon>
        <taxon>Dikarya</taxon>
        <taxon>Ascomycota</taxon>
        <taxon>Pezizomycotina</taxon>
        <taxon>Eurotiomycetes</taxon>
        <taxon>Eurotiomycetidae</taxon>
        <taxon>Eurotiales</taxon>
        <taxon>Aspergillaceae</taxon>
        <taxon>Penicillium</taxon>
        <taxon>Penicillium chrysogenum species complex</taxon>
    </lineage>
</organism>
<feature type="signal peptide" evidence="2">
    <location>
        <begin position="1"/>
        <end position="18"/>
    </location>
</feature>
<feature type="propeptide" id="PRO_0000391703" evidence="1">
    <location>
        <begin position="19"/>
        <end position="34"/>
    </location>
</feature>
<feature type="chain" id="PRO_0000391704" description="Antifungal protein B" evidence="1">
    <location>
        <begin position="35"/>
        <end position="92"/>
    </location>
</feature>
<feature type="disulfide bond" evidence="3 8">
    <location>
        <begin position="42"/>
        <end position="70"/>
    </location>
</feature>
<feature type="disulfide bond" evidence="3 8">
    <location>
        <begin position="49"/>
        <end position="77"/>
    </location>
</feature>
<feature type="disulfide bond" evidence="3 8">
    <location>
        <begin position="62"/>
        <end position="88"/>
    </location>
</feature>
<feature type="strand" evidence="9">
    <location>
        <begin position="37"/>
        <end position="43"/>
    </location>
</feature>
<feature type="turn" evidence="9">
    <location>
        <begin position="44"/>
        <end position="47"/>
    </location>
</feature>
<feature type="strand" evidence="9">
    <location>
        <begin position="48"/>
        <end position="53"/>
    </location>
</feature>
<feature type="strand" evidence="9">
    <location>
        <begin position="56"/>
        <end position="61"/>
    </location>
</feature>
<feature type="turn" evidence="9">
    <location>
        <begin position="66"/>
        <end position="68"/>
    </location>
</feature>
<feature type="strand" evidence="9">
    <location>
        <begin position="76"/>
        <end position="80"/>
    </location>
</feature>
<feature type="turn" evidence="9">
    <location>
        <begin position="81"/>
        <end position="84"/>
    </location>
</feature>
<feature type="strand" evidence="9">
    <location>
        <begin position="85"/>
        <end position="88"/>
    </location>
</feature>
<dbReference type="EMBL" id="AM920427">
    <property type="protein sequence ID" value="CAP80456.1"/>
    <property type="molecule type" value="Genomic_DNA"/>
</dbReference>
<dbReference type="RefSeq" id="XP_002557660.1">
    <property type="nucleotide sequence ID" value="XM_002557614.1"/>
</dbReference>
<dbReference type="PDB" id="7BAD">
    <property type="method" value="X-ray"/>
    <property type="resolution" value="1.69 A"/>
    <property type="chains" value="A=35-92"/>
</dbReference>
<dbReference type="PDB" id="7BAE">
    <property type="method" value="X-ray"/>
    <property type="resolution" value="1.20 A"/>
    <property type="chains" value="A=35-92"/>
</dbReference>
<dbReference type="PDB" id="7BAF">
    <property type="method" value="X-ray"/>
    <property type="resolution" value="1.12 A"/>
    <property type="chains" value="A=35-92"/>
</dbReference>
<dbReference type="PDBsum" id="7BAD"/>
<dbReference type="PDBsum" id="7BAE"/>
<dbReference type="PDBsum" id="7BAF"/>
<dbReference type="SMR" id="B6GXZ8"/>
<dbReference type="STRING" id="500485.B6GXZ8"/>
<dbReference type="GeneID" id="8309088"/>
<dbReference type="KEGG" id="pcs:N7525_001733"/>
<dbReference type="VEuPathDB" id="FungiDB:PCH_Pc12g08290"/>
<dbReference type="eggNOG" id="ENOG502RPIB">
    <property type="taxonomic scope" value="Eukaryota"/>
</dbReference>
<dbReference type="HOGENOM" id="CLU_182418_0_0_1"/>
<dbReference type="OMA" id="ITRIAIF"/>
<dbReference type="OrthoDB" id="4478077at2759"/>
<dbReference type="BioCyc" id="PCHR:PC12G08290-MONOMER"/>
<dbReference type="Proteomes" id="UP000000724">
    <property type="component" value="Contig Pc00c12"/>
</dbReference>
<dbReference type="GO" id="GO:0005576">
    <property type="term" value="C:extracellular region"/>
    <property type="evidence" value="ECO:0000250"/>
    <property type="project" value="UniProtKB"/>
</dbReference>
<dbReference type="GO" id="GO:0030430">
    <property type="term" value="C:host cell cytoplasm"/>
    <property type="evidence" value="ECO:0007669"/>
    <property type="project" value="UniProtKB-SubCell"/>
</dbReference>
<dbReference type="GO" id="GO:0050832">
    <property type="term" value="P:defense response to fungus"/>
    <property type="evidence" value="ECO:0000250"/>
    <property type="project" value="UniProtKB"/>
</dbReference>
<dbReference type="GO" id="GO:0031640">
    <property type="term" value="P:killing of cells of another organism"/>
    <property type="evidence" value="ECO:0007669"/>
    <property type="project" value="UniProtKB-KW"/>
</dbReference>
<dbReference type="Gene3D" id="2.40.50.60">
    <property type="entry name" value="Antifungal protein domain"/>
    <property type="match status" value="1"/>
</dbReference>
<dbReference type="InterPro" id="IPR023112">
    <property type="entry name" value="Antifungal-protein_dom_sf"/>
</dbReference>
<dbReference type="InterPro" id="IPR022706">
    <property type="entry name" value="Antifungal_prot"/>
</dbReference>
<dbReference type="Pfam" id="PF11402">
    <property type="entry name" value="Antifungal_prot"/>
    <property type="match status" value="1"/>
</dbReference>
<dbReference type="SUPFAM" id="SSF57598">
    <property type="entry name" value="Antifungal protein (AGAFP)"/>
    <property type="match status" value="1"/>
</dbReference>
<sequence length="92" mass="10046">MHITSIAIVFFAAMGAVASPIATESDDLDARDVQLSKFGGECSLKHNTCTYLKGGKNHVVNCGSAANKKCKSDRHHCEYDEHHKRVDCQTPV</sequence>
<accession>B6GXZ8</accession>
<reference key="1">
    <citation type="journal article" date="2008" name="Nat. Biotechnol.">
        <title>Genome sequencing and analysis of the filamentous fungus Penicillium chrysogenum.</title>
        <authorList>
            <person name="van den Berg M.A."/>
            <person name="Albang R."/>
            <person name="Albermann K."/>
            <person name="Badger J.H."/>
            <person name="Daran J.-M."/>
            <person name="Driessen A.J.M."/>
            <person name="Garcia-Estrada C."/>
            <person name="Fedorova N.D."/>
            <person name="Harris D.M."/>
            <person name="Heijne W.H.M."/>
            <person name="Joardar V.S."/>
            <person name="Kiel J.A.K.W."/>
            <person name="Kovalchuk A."/>
            <person name="Martin J.F."/>
            <person name="Nierman W.C."/>
            <person name="Nijland J.G."/>
            <person name="Pronk J.T."/>
            <person name="Roubos J.A."/>
            <person name="van der Klei I.J."/>
            <person name="van Peij N.N.M.E."/>
            <person name="Veenhuis M."/>
            <person name="von Doehren H."/>
            <person name="Wagner C."/>
            <person name="Wortman J.R."/>
            <person name="Bovenberg R.A.L."/>
        </authorList>
    </citation>
    <scope>NUCLEOTIDE SEQUENCE [LARGE SCALE GENOMIC DNA]</scope>
    <source>
        <strain>ATCC 28089 / DSM 1075 / NRRL 1951 / Wisconsin 54-1255</strain>
    </source>
</reference>
<reference evidence="6 7 8" key="2">
    <citation type="journal article" date="2021" name="J. Struct. Biol.">
        <title>Porous assembly of an antifungal protein mediated by zinc and sulfonato-calix[8]arene.</title>
        <authorList>
            <person name="Guagnini F."/>
            <person name="Huber A."/>
            <person name="Alex J.M."/>
            <person name="Marx F."/>
            <person name="Crowley P.B."/>
        </authorList>
    </citation>
    <scope>X-RAY CRYSTALLOGRAPHY (1.12 ANGSTROMS) OF 35-92</scope>
    <scope>DISULFIDE BOND</scope>
    <scope>FUNCTION</scope>
</reference>
<evidence type="ECO:0000250" key="1">
    <source>
        <dbReference type="UniProtKB" id="D0EXD3"/>
    </source>
</evidence>
<evidence type="ECO:0000255" key="2"/>
<evidence type="ECO:0000269" key="3">
    <source>
    </source>
</evidence>
<evidence type="ECO:0000303" key="4">
    <source>
    </source>
</evidence>
<evidence type="ECO:0000305" key="5"/>
<evidence type="ECO:0007744" key="6">
    <source>
        <dbReference type="PDB" id="7BAD"/>
    </source>
</evidence>
<evidence type="ECO:0007744" key="7">
    <source>
        <dbReference type="PDB" id="7BAE"/>
    </source>
</evidence>
<evidence type="ECO:0007744" key="8">
    <source>
        <dbReference type="PDB" id="7BAF"/>
    </source>
</evidence>
<evidence type="ECO:0007829" key="9">
    <source>
        <dbReference type="PDB" id="7BAF"/>
    </source>
</evidence>
<protein>
    <recommendedName>
        <fullName evidence="4">Antifungal protein B</fullName>
    </recommendedName>
</protein>
<comment type="function">
    <text evidence="1">Antifungal protein that acts as an inhibitor of growth of human pathogenic molds and yeasts.</text>
</comment>
<comment type="subcellular location">
    <subcellularLocation>
        <location evidence="1">Secreted</location>
    </subcellularLocation>
    <subcellularLocation>
        <location evidence="1">Host cytoplasm</location>
    </subcellularLocation>
</comment>
<comment type="similarity">
    <text evidence="5">Belongs to the antifungal protein pafB family.</text>
</comment>